<comment type="function">
    <text evidence="2">Inhibits trypsin stoichiometrically. Also inhibits chymotrypsin very weakly.</text>
</comment>
<comment type="subcellular location">
    <subcellularLocation>
        <location evidence="2">Secreted</location>
        <location evidence="2">Extracellular space</location>
    </subcellularLocation>
</comment>
<comment type="tissue specificity">
    <text>Hemolymph.</text>
</comment>
<feature type="chain" id="PRO_0000248503" description="Trypsin inhibitor">
    <location>
        <begin position="1"/>
        <end position="20" status="greater than"/>
    </location>
</feature>
<feature type="region of interest" description="Disordered" evidence="1">
    <location>
        <begin position="1"/>
        <end position="20"/>
    </location>
</feature>
<feature type="non-terminal residue" evidence="3">
    <location>
        <position position="20"/>
    </location>
</feature>
<keyword id="KW-0903">Direct protein sequencing</keyword>
<keyword id="KW-0646">Protease inhibitor</keyword>
<keyword id="KW-0964">Secreted</keyword>
<keyword id="KW-0722">Serine protease inhibitor</keyword>
<accession>P82109</accession>
<organism>
    <name type="scientific">Mythimna unipuncta</name>
    <name type="common">Armyworm moth</name>
    <name type="synonym">Pseudaletia unipuncta</name>
    <dbReference type="NCBI Taxonomy" id="103831"/>
    <lineage>
        <taxon>Eukaryota</taxon>
        <taxon>Metazoa</taxon>
        <taxon>Ecdysozoa</taxon>
        <taxon>Arthropoda</taxon>
        <taxon>Hexapoda</taxon>
        <taxon>Insecta</taxon>
        <taxon>Pterygota</taxon>
        <taxon>Neoptera</taxon>
        <taxon>Endopterygota</taxon>
        <taxon>Lepidoptera</taxon>
        <taxon>Glossata</taxon>
        <taxon>Ditrysia</taxon>
        <taxon>Noctuoidea</taxon>
        <taxon>Noctuidae</taxon>
        <taxon>Hadeninae</taxon>
        <taxon>Mythimna</taxon>
    </lineage>
</organism>
<protein>
    <recommendedName>
        <fullName>Trypsin inhibitor</fullName>
    </recommendedName>
    <alternativeName>
        <fullName>MTI</fullName>
    </alternativeName>
</protein>
<name>MTI_MYTUN</name>
<proteinExistence type="evidence at protein level"/>
<evidence type="ECO:0000256" key="1">
    <source>
        <dbReference type="SAM" id="MobiDB-lite"/>
    </source>
</evidence>
<evidence type="ECO:0000269" key="2">
    <source>
    </source>
</evidence>
<evidence type="ECO:0000303" key="3">
    <source>
    </source>
</evidence>
<evidence type="ECO:0000305" key="4"/>
<dbReference type="GO" id="GO:0005576">
    <property type="term" value="C:extracellular region"/>
    <property type="evidence" value="ECO:0007669"/>
    <property type="project" value="UniProtKB-SubCell"/>
</dbReference>
<dbReference type="GO" id="GO:0004867">
    <property type="term" value="F:serine-type endopeptidase inhibitor activity"/>
    <property type="evidence" value="ECO:0007669"/>
    <property type="project" value="UniProtKB-KW"/>
</dbReference>
<reference evidence="4" key="1">
    <citation type="journal article" date="2001" name="Insect Biochem. Mol. Biol.">
        <title>Purification and characterization of two serine protease inhibitors from the hemolymph of Mythimna unipuncta.</title>
        <authorList>
            <person name="Cherqui A."/>
            <person name="Cruz N."/>
            <person name="Simoes N."/>
        </authorList>
    </citation>
    <scope>PROTEIN SEQUENCE</scope>
    <scope>FUNCTION</scope>
    <scope>SUBCELLULAR LOCATION</scope>
    <source>
        <tissue evidence="2">Larval hemolymph</tissue>
    </source>
</reference>
<sequence>APSDTTIAETLTITEEFFPD</sequence>